<keyword id="KW-0479">Metal-binding</keyword>
<keyword id="KW-0500">Molybdenum</keyword>
<keyword id="KW-0560">Oxidoreductase</keyword>
<name>BISC_CERSP</name>
<dbReference type="EC" id="1.-.-.-"/>
<dbReference type="EMBL" id="U08189">
    <property type="protein sequence ID" value="AAA74739.1"/>
    <property type="molecule type" value="Genomic_DNA"/>
</dbReference>
<dbReference type="PIR" id="S65669">
    <property type="entry name" value="S65669"/>
</dbReference>
<dbReference type="SMR" id="P54934"/>
<dbReference type="BioCyc" id="MetaCyc:MONOMER-181"/>
<dbReference type="GO" id="GO:0030288">
    <property type="term" value="C:outer membrane-bounded periplasmic space"/>
    <property type="evidence" value="ECO:0007669"/>
    <property type="project" value="TreeGrafter"/>
</dbReference>
<dbReference type="GO" id="GO:0009055">
    <property type="term" value="F:electron transfer activity"/>
    <property type="evidence" value="ECO:0007669"/>
    <property type="project" value="TreeGrafter"/>
</dbReference>
<dbReference type="GO" id="GO:0030151">
    <property type="term" value="F:molybdenum ion binding"/>
    <property type="evidence" value="ECO:0007669"/>
    <property type="project" value="TreeGrafter"/>
</dbReference>
<dbReference type="GO" id="GO:0043546">
    <property type="term" value="F:molybdopterin cofactor binding"/>
    <property type="evidence" value="ECO:0007669"/>
    <property type="project" value="InterPro"/>
</dbReference>
<dbReference type="GO" id="GO:0016491">
    <property type="term" value="F:oxidoreductase activity"/>
    <property type="evidence" value="ECO:0007669"/>
    <property type="project" value="UniProtKB-KW"/>
</dbReference>
<dbReference type="GO" id="GO:0009061">
    <property type="term" value="P:anaerobic respiration"/>
    <property type="evidence" value="ECO:0007669"/>
    <property type="project" value="TreeGrafter"/>
</dbReference>
<dbReference type="Gene3D" id="2.40.40.20">
    <property type="match status" value="1"/>
</dbReference>
<dbReference type="Gene3D" id="3.40.50.740">
    <property type="match status" value="1"/>
</dbReference>
<dbReference type="Gene3D" id="3.40.228.10">
    <property type="entry name" value="Dimethylsulfoxide Reductase, domain 2"/>
    <property type="match status" value="1"/>
</dbReference>
<dbReference type="Gene3D" id="3.90.55.10">
    <property type="entry name" value="Dimethylsulfoxide Reductase, domain 3"/>
    <property type="match status" value="1"/>
</dbReference>
<dbReference type="InterPro" id="IPR009010">
    <property type="entry name" value="Asp_de-COase-like_dom_sf"/>
</dbReference>
<dbReference type="InterPro" id="IPR006658">
    <property type="entry name" value="BisC"/>
</dbReference>
<dbReference type="InterPro" id="IPR006657">
    <property type="entry name" value="MoPterin_dinucl-bd_dom"/>
</dbReference>
<dbReference type="InterPro" id="IPR006656">
    <property type="entry name" value="Mopterin_OxRdtase"/>
</dbReference>
<dbReference type="InterPro" id="IPR006655">
    <property type="entry name" value="Mopterin_OxRdtase_prok_CS"/>
</dbReference>
<dbReference type="InterPro" id="IPR050612">
    <property type="entry name" value="Prok_Mopterin_Oxidored"/>
</dbReference>
<dbReference type="NCBIfam" id="TIGR00509">
    <property type="entry name" value="bisC_fam"/>
    <property type="match status" value="1"/>
</dbReference>
<dbReference type="PANTHER" id="PTHR43742">
    <property type="entry name" value="TRIMETHYLAMINE-N-OXIDE REDUCTASE"/>
    <property type="match status" value="1"/>
</dbReference>
<dbReference type="PANTHER" id="PTHR43742:SF10">
    <property type="entry name" value="TRIMETHYLAMINE-N-OXIDE REDUCTASE 2"/>
    <property type="match status" value="1"/>
</dbReference>
<dbReference type="Pfam" id="PF00384">
    <property type="entry name" value="Molybdopterin"/>
    <property type="match status" value="1"/>
</dbReference>
<dbReference type="Pfam" id="PF01568">
    <property type="entry name" value="Molydop_binding"/>
    <property type="match status" value="1"/>
</dbReference>
<dbReference type="SUPFAM" id="SSF50692">
    <property type="entry name" value="ADC-like"/>
    <property type="match status" value="1"/>
</dbReference>
<dbReference type="SUPFAM" id="SSF53706">
    <property type="entry name" value="Formate dehydrogenase/DMSO reductase, domains 1-3"/>
    <property type="match status" value="1"/>
</dbReference>
<dbReference type="PROSITE" id="PS00490">
    <property type="entry name" value="MOLYBDOPTERIN_PROK_2"/>
    <property type="match status" value="1"/>
</dbReference>
<dbReference type="PROSITE" id="PS00932">
    <property type="entry name" value="MOLYBDOPTERIN_PROK_3"/>
    <property type="match status" value="1"/>
</dbReference>
<feature type="chain" id="PRO_0000063220" description="Biotin sulfoxide reductase">
    <location>
        <begin position="1"/>
        <end position="744"/>
    </location>
</feature>
<feature type="binding site" evidence="1">
    <location>
        <position position="121"/>
    </location>
    <ligand>
        <name>Mo-bis(molybdopterin guanine dinucleotide)</name>
        <dbReference type="ChEBI" id="CHEBI:60539"/>
    </ligand>
    <ligandPart>
        <name>Mo</name>
        <dbReference type="ChEBI" id="CHEBI:28685"/>
    </ligandPart>
</feature>
<organism>
    <name type="scientific">Cereibacter sphaeroides</name>
    <name type="common">Rhodobacter sphaeroides</name>
    <dbReference type="NCBI Taxonomy" id="1063"/>
    <lineage>
        <taxon>Bacteria</taxon>
        <taxon>Pseudomonadati</taxon>
        <taxon>Pseudomonadota</taxon>
        <taxon>Alphaproteobacteria</taxon>
        <taxon>Rhodobacterales</taxon>
        <taxon>Paracoccaceae</taxon>
        <taxon>Cereibacter</taxon>
    </lineage>
</organism>
<proteinExistence type="inferred from homology"/>
<comment type="function">
    <text evidence="1">This enzyme may serve as a scavenger, allowing the cell to utilize biotin sulfoxide as a biotin source. It reduces a spontaneous oxidation product of biotin, D-biotin D-sulfoxide (BSO or BDS), back to biotin (By similarity).</text>
</comment>
<comment type="cofactor">
    <cofactor evidence="1">
        <name>Mo-bis(molybdopterin guanine dinucleotide)</name>
        <dbReference type="ChEBI" id="CHEBI:60539"/>
    </cofactor>
    <text evidence="1">Binds 1 molybdenum-bis(molybdopterin guanine dinucleotide) (Mo-bis-MGD) cofactor per subunit.</text>
</comment>
<comment type="similarity">
    <text evidence="2">Belongs to the prokaryotic molybdopterin-containing oxidoreductase family.</text>
</comment>
<accession>P54934</accession>
<protein>
    <recommendedName>
        <fullName>Biotin sulfoxide reductase</fullName>
        <ecNumber>1.-.-.-</ecNumber>
    </recommendedName>
    <alternativeName>
        <fullName>BDS reductase</fullName>
    </alternativeName>
    <alternativeName>
        <fullName>BSO reductase</fullName>
    </alternativeName>
</protein>
<sequence>MGVEPFAHDPAPSELIHSVPACGSPERRVMRPMVREGWLADRQHSDRRGRGRERFLPVSWDAALDLVAGEIRRVSADHGNAAIFAGSYGWTSCGRFHHASTLLKRMLNLVGGFTGHVDTYSIAAGPVILRHTLGDDRACGGQANTLDSIAEHSQTLVVFGAMSPRTAQSEAGGIGAHHLETYLRRIVERGVRVILVSPLKDDLPDWVAAEWWPIRPNTDTALMLGLAGEIVRSGRQDSDFLARCTSGSELYLAYLRGEGDGRPKDAEWASTITGLPAEAIRALAGDLPRTRSMLTVSWSLQRAHHGEQPFWAALGLAAVIGQIGRPGGGVGYGYGSLGGVGAPFTIGKSPAMSQLSKPINSFIPVARISDMLLNPGGPYSYEGEDRRYPDIRLVYWSGGNPFHHHQDLNRLSEAWTRPETIIVQDPMFTATAKRADIVLPASTSIERNDLAGNKRSDFILAMGQAIAPLGEARSDFDIFNALSGKLGVAAAFNEGRDEMGWIRHLYEESRNHAQRHHHFEMPDFETFWAQGHAPCPVQRDHTYLAAFREDPGAHPLDTESGLIVLGSATLARLGYADCGPHPAWIEPAEWLGKAQAGELHLISHQPKGRLHSQLETAEASLAGKREGRDEVMLHPDDASVRGIADGQTVRLWNARGACLATAQVTDSVAAGVAILPTGAWFTPAEAEGPELSGNPNVLTLDIGSSAFGQGCSAHTCLVRIEAHAGDAGDAVRIYDAHLAAILPT</sequence>
<reference key="1">
    <citation type="journal article" date="1995" name="Arch. Biochem. Biophys.">
        <title>Molecular cloning and expression of biotin sulfoxide reductase from Rhodobacter sphaeroides forma sp. denitrificans.</title>
        <authorList>
            <person name="Pollock V.V."/>
            <person name="Barber M.J."/>
        </authorList>
    </citation>
    <scope>NUCLEOTIDE SEQUENCE [GENOMIC DNA]</scope>
    <source>
        <strain>f. sp. denitrificans IL106</strain>
    </source>
</reference>
<evidence type="ECO:0000250" key="1"/>
<evidence type="ECO:0000305" key="2"/>